<gene>
    <name evidence="1" type="primary">psd</name>
    <name type="ordered locus">Rru_A3585</name>
</gene>
<name>PSD_RHORT</name>
<evidence type="ECO:0000255" key="1">
    <source>
        <dbReference type="HAMAP-Rule" id="MF_00664"/>
    </source>
</evidence>
<dbReference type="EC" id="4.1.1.65" evidence="1"/>
<dbReference type="EMBL" id="CP000230">
    <property type="protein sequence ID" value="ABC24379.1"/>
    <property type="molecule type" value="Genomic_DNA"/>
</dbReference>
<dbReference type="RefSeq" id="WP_011391332.1">
    <property type="nucleotide sequence ID" value="NC_007643.1"/>
</dbReference>
<dbReference type="RefSeq" id="YP_428666.1">
    <property type="nucleotide sequence ID" value="NC_007643.1"/>
</dbReference>
<dbReference type="STRING" id="269796.Rru_A3585"/>
<dbReference type="EnsemblBacteria" id="ABC24379">
    <property type="protein sequence ID" value="ABC24379"/>
    <property type="gene ID" value="Rru_A3585"/>
</dbReference>
<dbReference type="KEGG" id="rru:Rru_A3585"/>
<dbReference type="PATRIC" id="fig|269796.9.peg.3706"/>
<dbReference type="eggNOG" id="COG0688">
    <property type="taxonomic scope" value="Bacteria"/>
</dbReference>
<dbReference type="HOGENOM" id="CLU_072492_0_0_5"/>
<dbReference type="PhylomeDB" id="Q2RNB6"/>
<dbReference type="UniPathway" id="UPA00558">
    <property type="reaction ID" value="UER00616"/>
</dbReference>
<dbReference type="Proteomes" id="UP000001929">
    <property type="component" value="Chromosome"/>
</dbReference>
<dbReference type="GO" id="GO:0005886">
    <property type="term" value="C:plasma membrane"/>
    <property type="evidence" value="ECO:0007669"/>
    <property type="project" value="UniProtKB-SubCell"/>
</dbReference>
<dbReference type="GO" id="GO:0004609">
    <property type="term" value="F:phosphatidylserine decarboxylase activity"/>
    <property type="evidence" value="ECO:0007669"/>
    <property type="project" value="UniProtKB-UniRule"/>
</dbReference>
<dbReference type="GO" id="GO:0006646">
    <property type="term" value="P:phosphatidylethanolamine biosynthetic process"/>
    <property type="evidence" value="ECO:0007669"/>
    <property type="project" value="UniProtKB-UniRule"/>
</dbReference>
<dbReference type="HAMAP" id="MF_00664">
    <property type="entry name" value="PS_decarb_PSD_A"/>
    <property type="match status" value="1"/>
</dbReference>
<dbReference type="InterPro" id="IPR003817">
    <property type="entry name" value="PS_Dcarbxylase"/>
</dbReference>
<dbReference type="InterPro" id="IPR033175">
    <property type="entry name" value="PSD-A"/>
</dbReference>
<dbReference type="NCBIfam" id="NF003679">
    <property type="entry name" value="PRK05305.1-3"/>
    <property type="match status" value="1"/>
</dbReference>
<dbReference type="PANTHER" id="PTHR35809">
    <property type="entry name" value="ARCHAETIDYLSERINE DECARBOXYLASE PROENZYME-RELATED"/>
    <property type="match status" value="1"/>
</dbReference>
<dbReference type="PANTHER" id="PTHR35809:SF1">
    <property type="entry name" value="ARCHAETIDYLSERINE DECARBOXYLASE PROENZYME-RELATED"/>
    <property type="match status" value="1"/>
</dbReference>
<dbReference type="Pfam" id="PF02666">
    <property type="entry name" value="PS_Dcarbxylase"/>
    <property type="match status" value="1"/>
</dbReference>
<protein>
    <recommendedName>
        <fullName evidence="1">Phosphatidylserine decarboxylase proenzyme</fullName>
        <ecNumber evidence="1">4.1.1.65</ecNumber>
    </recommendedName>
    <component>
        <recommendedName>
            <fullName evidence="1">Phosphatidylserine decarboxylase alpha chain</fullName>
        </recommendedName>
    </component>
    <component>
        <recommendedName>
            <fullName evidence="1">Phosphatidylserine decarboxylase beta chain</fullName>
        </recommendedName>
    </component>
</protein>
<sequence length="236" mass="25952">MRRFDIGWKTYLLPEIHPEGWRFISIFAAVTFGLWLWQDWLVVPGLVLTIWCVYFFRNPKRTVPDRLGLVVTPASGIVQMVGLVDPPAELALDPPGPRQRISVFMSVFDCHVNRCPVGGTVRKIVYAPGKFVNATLDKASADNERNSVVLDIGQSRDLAFVQIAGLVARRIRCDLVEGQSVLTGEIMGLIRFGSRLDIYLPPGAAPLVAPGQSCISGETVLADLASAEPERLGVLR</sequence>
<keyword id="KW-1003">Cell membrane</keyword>
<keyword id="KW-0210">Decarboxylase</keyword>
<keyword id="KW-0444">Lipid biosynthesis</keyword>
<keyword id="KW-0443">Lipid metabolism</keyword>
<keyword id="KW-0456">Lyase</keyword>
<keyword id="KW-0472">Membrane</keyword>
<keyword id="KW-0594">Phospholipid biosynthesis</keyword>
<keyword id="KW-1208">Phospholipid metabolism</keyword>
<keyword id="KW-0670">Pyruvate</keyword>
<keyword id="KW-1185">Reference proteome</keyword>
<keyword id="KW-0865">Zymogen</keyword>
<accession>Q2RNB6</accession>
<reference key="1">
    <citation type="journal article" date="2011" name="Stand. Genomic Sci.">
        <title>Complete genome sequence of Rhodospirillum rubrum type strain (S1).</title>
        <authorList>
            <person name="Munk A.C."/>
            <person name="Copeland A."/>
            <person name="Lucas S."/>
            <person name="Lapidus A."/>
            <person name="Del Rio T.G."/>
            <person name="Barry K."/>
            <person name="Detter J.C."/>
            <person name="Hammon N."/>
            <person name="Israni S."/>
            <person name="Pitluck S."/>
            <person name="Brettin T."/>
            <person name="Bruce D."/>
            <person name="Han C."/>
            <person name="Tapia R."/>
            <person name="Gilna P."/>
            <person name="Schmutz J."/>
            <person name="Larimer F."/>
            <person name="Land M."/>
            <person name="Kyrpides N.C."/>
            <person name="Mavromatis K."/>
            <person name="Richardson P."/>
            <person name="Rohde M."/>
            <person name="Goeker M."/>
            <person name="Klenk H.P."/>
            <person name="Zhang Y."/>
            <person name="Roberts G.P."/>
            <person name="Reslewic S."/>
            <person name="Schwartz D.C."/>
        </authorList>
    </citation>
    <scope>NUCLEOTIDE SEQUENCE [LARGE SCALE GENOMIC DNA]</scope>
    <source>
        <strain>ATCC 11170 / ATH 1.1.1 / DSM 467 / LMG 4362 / NCIMB 8255 / S1</strain>
    </source>
</reference>
<comment type="function">
    <text evidence="1">Catalyzes the formation of phosphatidylethanolamine (PtdEtn) from phosphatidylserine (PtdSer).</text>
</comment>
<comment type="catalytic activity">
    <reaction evidence="1">
        <text>a 1,2-diacyl-sn-glycero-3-phospho-L-serine + H(+) = a 1,2-diacyl-sn-glycero-3-phosphoethanolamine + CO2</text>
        <dbReference type="Rhea" id="RHEA:20828"/>
        <dbReference type="ChEBI" id="CHEBI:15378"/>
        <dbReference type="ChEBI" id="CHEBI:16526"/>
        <dbReference type="ChEBI" id="CHEBI:57262"/>
        <dbReference type="ChEBI" id="CHEBI:64612"/>
        <dbReference type="EC" id="4.1.1.65"/>
    </reaction>
</comment>
<comment type="cofactor">
    <cofactor evidence="1">
        <name>pyruvate</name>
        <dbReference type="ChEBI" id="CHEBI:15361"/>
    </cofactor>
    <text evidence="1">Binds 1 pyruvoyl group covalently per subunit.</text>
</comment>
<comment type="pathway">
    <text evidence="1">Phospholipid metabolism; phosphatidylethanolamine biosynthesis; phosphatidylethanolamine from CDP-diacylglycerol: step 2/2.</text>
</comment>
<comment type="subunit">
    <text evidence="1">Heterodimer of a large membrane-associated beta subunit and a small pyruvoyl-containing alpha subunit.</text>
</comment>
<comment type="subcellular location">
    <subcellularLocation>
        <location evidence="1">Cell membrane</location>
        <topology evidence="1">Peripheral membrane protein</topology>
    </subcellularLocation>
</comment>
<comment type="PTM">
    <text evidence="1">Is synthesized initially as an inactive proenzyme. Formation of the active enzyme involves a self-maturation process in which the active site pyruvoyl group is generated from an internal serine residue via an autocatalytic post-translational modification. Two non-identical subunits are generated from the proenzyme in this reaction, and the pyruvate is formed at the N-terminus of the alpha chain, which is derived from the carboxyl end of the proenzyme. The post-translation cleavage follows an unusual pathway, termed non-hydrolytic serinolysis, in which the side chain hydroxyl group of the serine supplies its oxygen atom to form the C-terminus of the beta chain, while the remainder of the serine residue undergoes an oxidative deamination to produce ammonia and the pyruvoyl prosthetic group on the alpha chain.</text>
</comment>
<comment type="similarity">
    <text evidence="1">Belongs to the phosphatidylserine decarboxylase family. PSD-A subfamily.</text>
</comment>
<feature type="chain" id="PRO_0000262263" description="Phosphatidylserine decarboxylase beta chain" evidence="1">
    <location>
        <begin position="1"/>
        <end position="193"/>
    </location>
</feature>
<feature type="chain" id="PRO_0000262264" description="Phosphatidylserine decarboxylase alpha chain" evidence="1">
    <location>
        <begin position="194"/>
        <end position="236"/>
    </location>
</feature>
<feature type="active site" description="Schiff-base intermediate with substrate; via pyruvic acid" evidence="1">
    <location>
        <position position="194"/>
    </location>
</feature>
<feature type="site" description="Cleavage (non-hydrolytic); by autocatalysis" evidence="1">
    <location>
        <begin position="193"/>
        <end position="194"/>
    </location>
</feature>
<feature type="modified residue" description="Pyruvic acid (Ser); by autocatalysis" evidence="1">
    <location>
        <position position="194"/>
    </location>
</feature>
<proteinExistence type="inferred from homology"/>
<organism>
    <name type="scientific">Rhodospirillum rubrum (strain ATCC 11170 / ATH 1.1.1 / DSM 467 / LMG 4362 / NCIMB 8255 / S1)</name>
    <dbReference type="NCBI Taxonomy" id="269796"/>
    <lineage>
        <taxon>Bacteria</taxon>
        <taxon>Pseudomonadati</taxon>
        <taxon>Pseudomonadota</taxon>
        <taxon>Alphaproteobacteria</taxon>
        <taxon>Rhodospirillales</taxon>
        <taxon>Rhodospirillaceae</taxon>
        <taxon>Rhodospirillum</taxon>
    </lineage>
</organism>